<feature type="chain" id="PRO_0000341615" description="Aquaporin AQPAn.G">
    <location>
        <begin position="1"/>
        <end position="250"/>
    </location>
</feature>
<feature type="topological domain" description="Cytoplasmic" evidence="2">
    <location>
        <begin position="1"/>
        <end position="26"/>
    </location>
</feature>
<feature type="transmembrane region" description="Helical; Name=1" evidence="2">
    <location>
        <begin position="27"/>
        <end position="47"/>
    </location>
</feature>
<feature type="topological domain" description="Extracellular" evidence="2">
    <location>
        <begin position="48"/>
        <end position="56"/>
    </location>
</feature>
<feature type="transmembrane region" description="Helical; Name=2" evidence="2">
    <location>
        <begin position="57"/>
        <end position="77"/>
    </location>
</feature>
<feature type="topological domain" description="Cytoplasmic" evidence="2">
    <location>
        <begin position="78"/>
        <end position="99"/>
    </location>
</feature>
<feature type="transmembrane region" description="Helical; Name=3" evidence="2">
    <location>
        <begin position="100"/>
        <end position="120"/>
    </location>
</feature>
<feature type="topological domain" description="Extracellular" evidence="2">
    <location>
        <begin position="121"/>
        <end position="137"/>
    </location>
</feature>
<feature type="transmembrane region" description="Helical; Name=4" evidence="2">
    <location>
        <begin position="138"/>
        <end position="158"/>
    </location>
</feature>
<feature type="topological domain" description="Cytoplasmic" evidence="2">
    <location>
        <begin position="159"/>
        <end position="168"/>
    </location>
</feature>
<feature type="transmembrane region" description="Helical; Name=5" evidence="2">
    <location>
        <begin position="169"/>
        <end position="189"/>
    </location>
</feature>
<feature type="topological domain" description="Extracellular" evidence="2">
    <location>
        <begin position="190"/>
        <end position="210"/>
    </location>
</feature>
<feature type="transmembrane region" description="Helical; Name=6" evidence="2">
    <location>
        <begin position="211"/>
        <end position="231"/>
    </location>
</feature>
<feature type="topological domain" description="Cytoplasmic" evidence="2">
    <location>
        <begin position="232"/>
        <end position="250"/>
    </location>
</feature>
<feature type="short sequence motif" description="NPA 1">
    <location>
        <begin position="81"/>
        <end position="83"/>
    </location>
</feature>
<feature type="short sequence motif" description="NPA 2">
    <location>
        <begin position="197"/>
        <end position="199"/>
    </location>
</feature>
<comment type="function">
    <text evidence="1">Forms a water-specific channel.</text>
</comment>
<comment type="subunit">
    <text evidence="1">Homotetramer.</text>
</comment>
<comment type="subcellular location">
    <subcellularLocation>
        <location evidence="1">Membrane</location>
        <topology evidence="1">Multi-pass membrane protein</topology>
    </subcellularLocation>
</comment>
<comment type="domain">
    <text>Aquaporins contain two tandem repeats each containing three membrane-spanning domains and a pore-forming loop with the signature motif Asn-Pro-Ala (NPA).</text>
</comment>
<comment type="similarity">
    <text evidence="3">Belongs to the MIP/aquaporin (TC 1.A.8) family.</text>
</comment>
<sequence length="250" mass="26008">MTESAGVKQIVGVSDITENRNIWRMLVAEFLGTFFLVAIGIGSTTGWTDYSPTLTQIAFTFGLVVATLAQAFGHVSGCHINPAVTIGLIVTADVSILKGAFYIVSQCIGAIAGAAVIKAATPSEVVGGLGVTGIAPGLSTGQGVLIEALITFMLVFVVHGVCDNRRTDVKGSAPLAIGLSITAGHLAAIKYTGASMNPARSFGPAVVMGNYTDLWVYWVGPIVGGIVAGAVYRLFFKVRKGDEESNSYDF</sequence>
<dbReference type="EMBL" id="AAAB01008984">
    <property type="protein sequence ID" value="EAA14819.5"/>
    <property type="molecule type" value="Genomic_DNA"/>
</dbReference>
<dbReference type="RefSeq" id="XP_319584.4">
    <property type="nucleotide sequence ID" value="XM_319584.4"/>
</dbReference>
<dbReference type="SMR" id="Q7PWV1"/>
<dbReference type="FunCoup" id="Q7PWV1">
    <property type="interactions" value="51"/>
</dbReference>
<dbReference type="STRING" id="7165.Q7PWV1"/>
<dbReference type="PaxDb" id="7165-AGAP008842-PA"/>
<dbReference type="VEuPathDB" id="VectorBase:AGAMI1_013863"/>
<dbReference type="VEuPathDB" id="VectorBase:AGAP008842"/>
<dbReference type="eggNOG" id="KOG0223">
    <property type="taxonomic scope" value="Eukaryota"/>
</dbReference>
<dbReference type="HOGENOM" id="CLU_020019_3_3_1"/>
<dbReference type="InParanoid" id="Q7PWV1"/>
<dbReference type="OMA" id="MHYEEAN"/>
<dbReference type="PhylomeDB" id="Q7PWV1"/>
<dbReference type="Proteomes" id="UP000007062">
    <property type="component" value="Chromosome 3R"/>
</dbReference>
<dbReference type="GO" id="GO:0005886">
    <property type="term" value="C:plasma membrane"/>
    <property type="evidence" value="ECO:0000318"/>
    <property type="project" value="GO_Central"/>
</dbReference>
<dbReference type="GO" id="GO:0015267">
    <property type="term" value="F:channel activity"/>
    <property type="evidence" value="ECO:0007669"/>
    <property type="project" value="InterPro"/>
</dbReference>
<dbReference type="CDD" id="cd00333">
    <property type="entry name" value="MIP"/>
    <property type="match status" value="1"/>
</dbReference>
<dbReference type="FunFam" id="1.20.1080.10:FF:000009">
    <property type="entry name" value="aquaporin-4 isoform X1"/>
    <property type="match status" value="1"/>
</dbReference>
<dbReference type="Gene3D" id="1.20.1080.10">
    <property type="entry name" value="Glycerol uptake facilitator protein"/>
    <property type="match status" value="1"/>
</dbReference>
<dbReference type="InterPro" id="IPR023271">
    <property type="entry name" value="Aquaporin-like"/>
</dbReference>
<dbReference type="InterPro" id="IPR034294">
    <property type="entry name" value="Aquaporin_transptr"/>
</dbReference>
<dbReference type="InterPro" id="IPR000425">
    <property type="entry name" value="MIP"/>
</dbReference>
<dbReference type="InterPro" id="IPR022357">
    <property type="entry name" value="MIP_CS"/>
</dbReference>
<dbReference type="NCBIfam" id="TIGR00861">
    <property type="entry name" value="MIP"/>
    <property type="match status" value="1"/>
</dbReference>
<dbReference type="PANTHER" id="PTHR19139:SF291">
    <property type="entry name" value="AQUAPORIN"/>
    <property type="match status" value="1"/>
</dbReference>
<dbReference type="PANTHER" id="PTHR19139">
    <property type="entry name" value="AQUAPORIN TRANSPORTER"/>
    <property type="match status" value="1"/>
</dbReference>
<dbReference type="Pfam" id="PF00230">
    <property type="entry name" value="MIP"/>
    <property type="match status" value="1"/>
</dbReference>
<dbReference type="PRINTS" id="PR02016">
    <property type="entry name" value="AQUAPORIN4"/>
</dbReference>
<dbReference type="PRINTS" id="PR00783">
    <property type="entry name" value="MINTRINSICP"/>
</dbReference>
<dbReference type="SUPFAM" id="SSF81338">
    <property type="entry name" value="Aquaporin-like"/>
    <property type="match status" value="1"/>
</dbReference>
<dbReference type="PROSITE" id="PS00221">
    <property type="entry name" value="MIP"/>
    <property type="match status" value="1"/>
</dbReference>
<reference key="1">
    <citation type="journal article" date="2002" name="Science">
        <title>The genome sequence of the malaria mosquito Anopheles gambiae.</title>
        <authorList>
            <person name="Holt R.A."/>
            <person name="Subramanian G.M."/>
            <person name="Halpern A."/>
            <person name="Sutton G.G."/>
            <person name="Charlab R."/>
            <person name="Nusskern D.R."/>
            <person name="Wincker P."/>
            <person name="Clark A.G."/>
            <person name="Ribeiro J.M.C."/>
            <person name="Wides R."/>
            <person name="Salzberg S.L."/>
            <person name="Loftus B.J."/>
            <person name="Yandell M.D."/>
            <person name="Majoros W.H."/>
            <person name="Rusch D.B."/>
            <person name="Lai Z."/>
            <person name="Kraft C.L."/>
            <person name="Abril J.F."/>
            <person name="Anthouard V."/>
            <person name="Arensburger P."/>
            <person name="Atkinson P.W."/>
            <person name="Baden H."/>
            <person name="de Berardinis V."/>
            <person name="Baldwin D."/>
            <person name="Benes V."/>
            <person name="Biedler J."/>
            <person name="Blass C."/>
            <person name="Bolanos R."/>
            <person name="Boscus D."/>
            <person name="Barnstead M."/>
            <person name="Cai S."/>
            <person name="Center A."/>
            <person name="Chaturverdi K."/>
            <person name="Christophides G.K."/>
            <person name="Chrystal M.A.M."/>
            <person name="Clamp M."/>
            <person name="Cravchik A."/>
            <person name="Curwen V."/>
            <person name="Dana A."/>
            <person name="Delcher A."/>
            <person name="Dew I."/>
            <person name="Evans C.A."/>
            <person name="Flanigan M."/>
            <person name="Grundschober-Freimoser A."/>
            <person name="Friedli L."/>
            <person name="Gu Z."/>
            <person name="Guan P."/>
            <person name="Guigo R."/>
            <person name="Hillenmeyer M.E."/>
            <person name="Hladun S.L."/>
            <person name="Hogan J.R."/>
            <person name="Hong Y.S."/>
            <person name="Hoover J."/>
            <person name="Jaillon O."/>
            <person name="Ke Z."/>
            <person name="Kodira C.D."/>
            <person name="Kokoza E."/>
            <person name="Koutsos A."/>
            <person name="Letunic I."/>
            <person name="Levitsky A.A."/>
            <person name="Liang Y."/>
            <person name="Lin J.-J."/>
            <person name="Lobo N.F."/>
            <person name="Lopez J.R."/>
            <person name="Malek J.A."/>
            <person name="McIntosh T.C."/>
            <person name="Meister S."/>
            <person name="Miller J.R."/>
            <person name="Mobarry C."/>
            <person name="Mongin E."/>
            <person name="Murphy S.D."/>
            <person name="O'Brochta D.A."/>
            <person name="Pfannkoch C."/>
            <person name="Qi R."/>
            <person name="Regier M.A."/>
            <person name="Remington K."/>
            <person name="Shao H."/>
            <person name="Sharakhova M.V."/>
            <person name="Sitter C.D."/>
            <person name="Shetty J."/>
            <person name="Smith T.J."/>
            <person name="Strong R."/>
            <person name="Sun J."/>
            <person name="Thomasova D."/>
            <person name="Ton L.Q."/>
            <person name="Topalis P."/>
            <person name="Tu Z.J."/>
            <person name="Unger M.F."/>
            <person name="Walenz B."/>
            <person name="Wang A.H."/>
            <person name="Wang J."/>
            <person name="Wang M."/>
            <person name="Wang X."/>
            <person name="Woodford K.J."/>
            <person name="Wortman J.R."/>
            <person name="Wu M."/>
            <person name="Yao A."/>
            <person name="Zdobnov E.M."/>
            <person name="Zhang H."/>
            <person name="Zhao Q."/>
            <person name="Zhao S."/>
            <person name="Zhu S.C."/>
            <person name="Zhimulev I."/>
            <person name="Coluzzi M."/>
            <person name="della Torre A."/>
            <person name="Roth C.W."/>
            <person name="Louis C."/>
            <person name="Kalush F."/>
            <person name="Mural R.J."/>
            <person name="Myers E.W."/>
            <person name="Adams M.D."/>
            <person name="Smith H.O."/>
            <person name="Broder S."/>
            <person name="Gardner M.J."/>
            <person name="Fraser C.M."/>
            <person name="Birney E."/>
            <person name="Bork P."/>
            <person name="Brey P.T."/>
            <person name="Venter J.C."/>
            <person name="Weissenbach J."/>
            <person name="Kafatos F.C."/>
            <person name="Collins F.H."/>
            <person name="Hoffman S.L."/>
        </authorList>
    </citation>
    <scope>NUCLEOTIDE SEQUENCE [LARGE SCALE GENOMIC DNA]</scope>
    <source>
        <strain>PEST</strain>
    </source>
</reference>
<evidence type="ECO:0000250" key="1"/>
<evidence type="ECO:0000255" key="2"/>
<evidence type="ECO:0000305" key="3"/>
<protein>
    <recommendedName>
        <fullName>Aquaporin AQPAn.G</fullName>
    </recommendedName>
</protein>
<organism>
    <name type="scientific">Anopheles gambiae</name>
    <name type="common">African malaria mosquito</name>
    <dbReference type="NCBI Taxonomy" id="7165"/>
    <lineage>
        <taxon>Eukaryota</taxon>
        <taxon>Metazoa</taxon>
        <taxon>Ecdysozoa</taxon>
        <taxon>Arthropoda</taxon>
        <taxon>Hexapoda</taxon>
        <taxon>Insecta</taxon>
        <taxon>Pterygota</taxon>
        <taxon>Neoptera</taxon>
        <taxon>Endopterygota</taxon>
        <taxon>Diptera</taxon>
        <taxon>Nematocera</taxon>
        <taxon>Culicoidea</taxon>
        <taxon>Culicidae</taxon>
        <taxon>Anophelinae</taxon>
        <taxon>Anopheles</taxon>
    </lineage>
</organism>
<keyword id="KW-0472">Membrane</keyword>
<keyword id="KW-1185">Reference proteome</keyword>
<keyword id="KW-0677">Repeat</keyword>
<keyword id="KW-0812">Transmembrane</keyword>
<keyword id="KW-1133">Transmembrane helix</keyword>
<keyword id="KW-0813">Transport</keyword>
<gene>
    <name type="ORF">AGAP008842</name>
</gene>
<accession>Q7PWV1</accession>
<name>AQP_ANOGA</name>
<proteinExistence type="inferred from homology"/>